<gene>
    <name evidence="11" type="primary">GDA</name>
    <name evidence="6" type="synonym">KIAA1258</name>
</gene>
<sequence length="454" mass="51003">MCAAQMPPLAHIFRGTFVHSTWTCPMEVLRDHLLGVSDSGKIVFLEEASQQEKLAKEWCFKPCEIRELSHHEFFMPGLVDTHIHASQYSFAGSSIDLPLLEWLTKYTFPAEHRFQNIDFAEEVYTRVVRRTLKNGTTTACYFATIHTDSSLLLADITDKFGQRAFVGKVCMDLNDTFPEYKETTEESIKETERFVSEMLQKNYSRVKPIVTPRFSLSCSETLMGELGNIAKTRDLHIQSHISENRDEVEAVKNLYPSYKNYTSVYDKNNLLTNKTVMAHGCYLSAEELNVFHERGASIAHCPNSNLSLSSGFLNVLEVLKHEVKIGLGTDVAGGYSYSMLDAIRRAVMVSNILLINKVNEKSLTLKEVFRLATLGGSQALGLDGEIGNFEVGKEFDAILINPKASDSPIDLFYGDFFGDISEAVIQKFLYLGDDRNIEEVYVGGKQVVPFSSSV</sequence>
<comment type="function">
    <text evidence="2 3">Catalyzes the hydrolytic deamination of guanine, producing xanthine and ammonia.</text>
</comment>
<comment type="catalytic activity">
    <reaction evidence="2 3">
        <text>guanine + H2O + H(+) = xanthine + NH4(+)</text>
        <dbReference type="Rhea" id="RHEA:14665"/>
        <dbReference type="ChEBI" id="CHEBI:15377"/>
        <dbReference type="ChEBI" id="CHEBI:15378"/>
        <dbReference type="ChEBI" id="CHEBI:16235"/>
        <dbReference type="ChEBI" id="CHEBI:17712"/>
        <dbReference type="ChEBI" id="CHEBI:28938"/>
        <dbReference type="EC" id="3.5.4.3"/>
    </reaction>
    <physiologicalReaction direction="left-to-right" evidence="2 3">
        <dbReference type="Rhea" id="RHEA:14666"/>
    </physiologicalReaction>
</comment>
<comment type="cofactor">
    <cofactor evidence="3">
        <name>Zn(2+)</name>
        <dbReference type="ChEBI" id="CHEBI:29105"/>
    </cofactor>
    <text evidence="3">Binds 1 zinc ion per subunit.</text>
</comment>
<comment type="biophysicochemical properties">
    <kinetics>
        <KM evidence="2">9.5 uM for guanine</KM>
        <text evidence="2">kcat is 17.4 sec(-1) with guanine as substrate.</text>
    </kinetics>
</comment>
<comment type="pathway">
    <text evidence="2">Purine metabolism; guanine degradation; xanthine from guanine: step 1/1.</text>
</comment>
<comment type="subunit">
    <text evidence="4">Homodimer.</text>
</comment>
<comment type="alternative products">
    <event type="alternative splicing"/>
    <isoform>
        <id>Q9Y2T3-1</id>
        <name>1</name>
        <sequence type="displayed"/>
    </isoform>
    <isoform>
        <id>Q9Y2T3-2</id>
        <name>2</name>
        <name>c</name>
        <sequence type="described" ref="VSP_042075"/>
    </isoform>
    <isoform>
        <id>Q9Y2T3-3</id>
        <name>3</name>
        <name>a</name>
        <sequence type="described" ref="VSP_042076"/>
    </isoform>
</comment>
<comment type="similarity">
    <text evidence="9">Belongs to the metallo-dependent hydrolases superfamily. ATZ/TRZ family.</text>
</comment>
<comment type="sequence caution" evidence="9">
    <conflict type="erroneous initiation">
        <sequence resource="EMBL-CDS" id="BAA86572"/>
    </conflict>
    <text>Extended N-terminus.</text>
</comment>
<keyword id="KW-0002">3D-structure</keyword>
<keyword id="KW-0025">Alternative splicing</keyword>
<keyword id="KW-0378">Hydrolase</keyword>
<keyword id="KW-0479">Metal-binding</keyword>
<keyword id="KW-0597">Phosphoprotein</keyword>
<keyword id="KW-1267">Proteomics identification</keyword>
<keyword id="KW-1185">Reference proteome</keyword>
<keyword id="KW-0862">Zinc</keyword>
<evidence type="ECO:0000250" key="1">
    <source>
        <dbReference type="UniProtKB" id="Q9WTT6"/>
    </source>
</evidence>
<evidence type="ECO:0000269" key="2">
    <source>
    </source>
</evidence>
<evidence type="ECO:0000269" key="3">
    <source>
    </source>
</evidence>
<evidence type="ECO:0000269" key="4">
    <source ref="11"/>
</evidence>
<evidence type="ECO:0000303" key="5">
    <source>
    </source>
</evidence>
<evidence type="ECO:0000303" key="6">
    <source>
    </source>
</evidence>
<evidence type="ECO:0000303" key="7">
    <source>
    </source>
</evidence>
<evidence type="ECO:0000303" key="8">
    <source ref="3"/>
</evidence>
<evidence type="ECO:0000305" key="9"/>
<evidence type="ECO:0000305" key="10">
    <source>
    </source>
</evidence>
<evidence type="ECO:0000312" key="11">
    <source>
        <dbReference type="HGNC" id="HGNC:4212"/>
    </source>
</evidence>
<evidence type="ECO:0007744" key="12">
    <source>
        <dbReference type="PDB" id="2UZ9"/>
    </source>
</evidence>
<evidence type="ECO:0007829" key="13">
    <source>
        <dbReference type="PDB" id="2UZ9"/>
    </source>
</evidence>
<evidence type="ECO:0007829" key="14">
    <source>
        <dbReference type="PDB" id="4AQL"/>
    </source>
</evidence>
<protein>
    <recommendedName>
        <fullName>Guanine deaminase</fullName>
        <shortName>Guanase</shortName>
        <shortName>Guanine aminase</shortName>
        <ecNumber evidence="2 3">3.5.4.3</ecNumber>
    </recommendedName>
    <alternativeName>
        <fullName>Guanine aminohydrolase</fullName>
        <shortName>GAH</shortName>
    </alternativeName>
    <alternativeName>
        <fullName>p51-nedasin</fullName>
    </alternativeName>
</protein>
<proteinExistence type="evidence at protein level"/>
<accession>Q9Y2T3</accession>
<accession>B4DTY5</accession>
<accession>Q5SZC7</accession>
<accession>Q9H335</accession>
<accession>Q9ULG2</accession>
<reference key="1">
    <citation type="journal article" date="1999" name="J. Biol. Chem.">
        <title>Cloning and characterization of human guanine deaminase. Purification and partial amino acid sequence of the mouse protein.</title>
        <authorList>
            <person name="Yuan G."/>
            <person name="Bin J.C."/>
            <person name="McKay D.J."/>
            <person name="Snyder F.F."/>
        </authorList>
    </citation>
    <scope>NUCLEOTIDE SEQUENCE [MRNA] (ISOFORM 1)</scope>
    <scope>FUNCTION</scope>
    <scope>CATALYTIC ACTIVITY</scope>
    <scope>PATHWAY</scope>
    <scope>BIOPHYSICOCHEMICAL PROPERTIES</scope>
    <source>
        <tissue>Brain</tissue>
    </source>
</reference>
<reference key="2">
    <citation type="journal article" date="1999" name="J. Biol. Chem.">
        <title>A novel NE-dlg/SAP102-associated protein, p51-nedasin, related to the amidohydrolase superfamily, interferes with the association between NE-dlg/SAP102 and N-methyl-D-aspartate receptor.</title>
        <authorList>
            <person name="Kuwahara H."/>
            <person name="Araki N."/>
            <person name="Makino K."/>
            <person name="Masuko N."/>
            <person name="Honda S."/>
            <person name="Kaibuchi K."/>
            <person name="Fukunaga K."/>
            <person name="Miyamoto E."/>
            <person name="Ogawa M."/>
            <person name="Saya H."/>
        </authorList>
    </citation>
    <scope>NUCLEOTIDE SEQUENCE [MRNA] (ISOFORM 2)</scope>
    <source>
        <tissue>Brain</tissue>
    </source>
</reference>
<reference key="3">
    <citation type="submission" date="1999-04" db="EMBL/GenBank/DDBJ databases">
        <title>Molecular cloning of human guanine aminohydrolase.</title>
        <authorList>
            <person name="Park K.H."/>
            <person name="Seong Y.S."/>
            <person name="Park J.B."/>
        </authorList>
    </citation>
    <scope>NUCLEOTIDE SEQUENCE [MRNA] (ISOFORM 3)</scope>
</reference>
<reference key="4">
    <citation type="journal article" date="1999" name="DNA Res.">
        <title>Prediction of the coding sequences of unidentified human genes. XV. The complete sequences of 100 new cDNA clones from brain which code for large proteins in vitro.</title>
        <authorList>
            <person name="Nagase T."/>
            <person name="Ishikawa K."/>
            <person name="Kikuno R."/>
            <person name="Hirosawa M."/>
            <person name="Nomura N."/>
            <person name="Ohara O."/>
        </authorList>
    </citation>
    <scope>NUCLEOTIDE SEQUENCE [LARGE SCALE MRNA] (ISOFORM 1)</scope>
    <source>
        <tissue>Brain</tissue>
    </source>
</reference>
<reference key="5">
    <citation type="journal article" date="2004" name="Nat. Genet.">
        <title>Complete sequencing and characterization of 21,243 full-length human cDNAs.</title>
        <authorList>
            <person name="Ota T."/>
            <person name="Suzuki Y."/>
            <person name="Nishikawa T."/>
            <person name="Otsuki T."/>
            <person name="Sugiyama T."/>
            <person name="Irie R."/>
            <person name="Wakamatsu A."/>
            <person name="Hayashi K."/>
            <person name="Sato H."/>
            <person name="Nagai K."/>
            <person name="Kimura K."/>
            <person name="Makita H."/>
            <person name="Sekine M."/>
            <person name="Obayashi M."/>
            <person name="Nishi T."/>
            <person name="Shibahara T."/>
            <person name="Tanaka T."/>
            <person name="Ishii S."/>
            <person name="Yamamoto J."/>
            <person name="Saito K."/>
            <person name="Kawai Y."/>
            <person name="Isono Y."/>
            <person name="Nakamura Y."/>
            <person name="Nagahari K."/>
            <person name="Murakami K."/>
            <person name="Yasuda T."/>
            <person name="Iwayanagi T."/>
            <person name="Wagatsuma M."/>
            <person name="Shiratori A."/>
            <person name="Sudo H."/>
            <person name="Hosoiri T."/>
            <person name="Kaku Y."/>
            <person name="Kodaira H."/>
            <person name="Kondo H."/>
            <person name="Sugawara M."/>
            <person name="Takahashi M."/>
            <person name="Kanda K."/>
            <person name="Yokoi T."/>
            <person name="Furuya T."/>
            <person name="Kikkawa E."/>
            <person name="Omura Y."/>
            <person name="Abe K."/>
            <person name="Kamihara K."/>
            <person name="Katsuta N."/>
            <person name="Sato K."/>
            <person name="Tanikawa M."/>
            <person name="Yamazaki M."/>
            <person name="Ninomiya K."/>
            <person name="Ishibashi T."/>
            <person name="Yamashita H."/>
            <person name="Murakawa K."/>
            <person name="Fujimori K."/>
            <person name="Tanai H."/>
            <person name="Kimata M."/>
            <person name="Watanabe M."/>
            <person name="Hiraoka S."/>
            <person name="Chiba Y."/>
            <person name="Ishida S."/>
            <person name="Ono Y."/>
            <person name="Takiguchi S."/>
            <person name="Watanabe S."/>
            <person name="Yosida M."/>
            <person name="Hotuta T."/>
            <person name="Kusano J."/>
            <person name="Kanehori K."/>
            <person name="Takahashi-Fujii A."/>
            <person name="Hara H."/>
            <person name="Tanase T.-O."/>
            <person name="Nomura Y."/>
            <person name="Togiya S."/>
            <person name="Komai F."/>
            <person name="Hara R."/>
            <person name="Takeuchi K."/>
            <person name="Arita M."/>
            <person name="Imose N."/>
            <person name="Musashino K."/>
            <person name="Yuuki H."/>
            <person name="Oshima A."/>
            <person name="Sasaki N."/>
            <person name="Aotsuka S."/>
            <person name="Yoshikawa Y."/>
            <person name="Matsunawa H."/>
            <person name="Ichihara T."/>
            <person name="Shiohata N."/>
            <person name="Sano S."/>
            <person name="Moriya S."/>
            <person name="Momiyama H."/>
            <person name="Satoh N."/>
            <person name="Takami S."/>
            <person name="Terashima Y."/>
            <person name="Suzuki O."/>
            <person name="Nakagawa S."/>
            <person name="Senoh A."/>
            <person name="Mizoguchi H."/>
            <person name="Goto Y."/>
            <person name="Shimizu F."/>
            <person name="Wakebe H."/>
            <person name="Hishigaki H."/>
            <person name="Watanabe T."/>
            <person name="Sugiyama A."/>
            <person name="Takemoto M."/>
            <person name="Kawakami B."/>
            <person name="Yamazaki M."/>
            <person name="Watanabe K."/>
            <person name="Kumagai A."/>
            <person name="Itakura S."/>
            <person name="Fukuzumi Y."/>
            <person name="Fujimori Y."/>
            <person name="Komiyama M."/>
            <person name="Tashiro H."/>
            <person name="Tanigami A."/>
            <person name="Fujiwara T."/>
            <person name="Ono T."/>
            <person name="Yamada K."/>
            <person name="Fujii Y."/>
            <person name="Ozaki K."/>
            <person name="Hirao M."/>
            <person name="Ohmori Y."/>
            <person name="Kawabata A."/>
            <person name="Hikiji T."/>
            <person name="Kobatake N."/>
            <person name="Inagaki H."/>
            <person name="Ikema Y."/>
            <person name="Okamoto S."/>
            <person name="Okitani R."/>
            <person name="Kawakami T."/>
            <person name="Noguchi S."/>
            <person name="Itoh T."/>
            <person name="Shigeta K."/>
            <person name="Senba T."/>
            <person name="Matsumura K."/>
            <person name="Nakajima Y."/>
            <person name="Mizuno T."/>
            <person name="Morinaga M."/>
            <person name="Sasaki M."/>
            <person name="Togashi T."/>
            <person name="Oyama M."/>
            <person name="Hata H."/>
            <person name="Watanabe M."/>
            <person name="Komatsu T."/>
            <person name="Mizushima-Sugano J."/>
            <person name="Satoh T."/>
            <person name="Shirai Y."/>
            <person name="Takahashi Y."/>
            <person name="Nakagawa K."/>
            <person name="Okumura K."/>
            <person name="Nagase T."/>
            <person name="Nomura N."/>
            <person name="Kikuchi H."/>
            <person name="Masuho Y."/>
            <person name="Yamashita R."/>
            <person name="Nakai K."/>
            <person name="Yada T."/>
            <person name="Nakamura Y."/>
            <person name="Ohara O."/>
            <person name="Isogai T."/>
            <person name="Sugano S."/>
        </authorList>
    </citation>
    <scope>NUCLEOTIDE SEQUENCE [LARGE SCALE MRNA] (ISOFORM 2)</scope>
</reference>
<reference key="6">
    <citation type="journal article" date="2004" name="Nature">
        <title>DNA sequence and analysis of human chromosome 9.</title>
        <authorList>
            <person name="Humphray S.J."/>
            <person name="Oliver K."/>
            <person name="Hunt A.R."/>
            <person name="Plumb R.W."/>
            <person name="Loveland J.E."/>
            <person name="Howe K.L."/>
            <person name="Andrews T.D."/>
            <person name="Searle S."/>
            <person name="Hunt S.E."/>
            <person name="Scott C.E."/>
            <person name="Jones M.C."/>
            <person name="Ainscough R."/>
            <person name="Almeida J.P."/>
            <person name="Ambrose K.D."/>
            <person name="Ashwell R.I.S."/>
            <person name="Babbage A.K."/>
            <person name="Babbage S."/>
            <person name="Bagguley C.L."/>
            <person name="Bailey J."/>
            <person name="Banerjee R."/>
            <person name="Barker D.J."/>
            <person name="Barlow K.F."/>
            <person name="Bates K."/>
            <person name="Beasley H."/>
            <person name="Beasley O."/>
            <person name="Bird C.P."/>
            <person name="Bray-Allen S."/>
            <person name="Brown A.J."/>
            <person name="Brown J.Y."/>
            <person name="Burford D."/>
            <person name="Burrill W."/>
            <person name="Burton J."/>
            <person name="Carder C."/>
            <person name="Carter N.P."/>
            <person name="Chapman J.C."/>
            <person name="Chen Y."/>
            <person name="Clarke G."/>
            <person name="Clark S.Y."/>
            <person name="Clee C.M."/>
            <person name="Clegg S."/>
            <person name="Collier R.E."/>
            <person name="Corby N."/>
            <person name="Crosier M."/>
            <person name="Cummings A.T."/>
            <person name="Davies J."/>
            <person name="Dhami P."/>
            <person name="Dunn M."/>
            <person name="Dutta I."/>
            <person name="Dyer L.W."/>
            <person name="Earthrowl M.E."/>
            <person name="Faulkner L."/>
            <person name="Fleming C.J."/>
            <person name="Frankish A."/>
            <person name="Frankland J.A."/>
            <person name="French L."/>
            <person name="Fricker D.G."/>
            <person name="Garner P."/>
            <person name="Garnett J."/>
            <person name="Ghori J."/>
            <person name="Gilbert J.G.R."/>
            <person name="Glison C."/>
            <person name="Grafham D.V."/>
            <person name="Gribble S."/>
            <person name="Griffiths C."/>
            <person name="Griffiths-Jones S."/>
            <person name="Grocock R."/>
            <person name="Guy J."/>
            <person name="Hall R.E."/>
            <person name="Hammond S."/>
            <person name="Harley J.L."/>
            <person name="Harrison E.S.I."/>
            <person name="Hart E.A."/>
            <person name="Heath P.D."/>
            <person name="Henderson C.D."/>
            <person name="Hopkins B.L."/>
            <person name="Howard P.J."/>
            <person name="Howden P.J."/>
            <person name="Huckle E."/>
            <person name="Johnson C."/>
            <person name="Johnson D."/>
            <person name="Joy A.A."/>
            <person name="Kay M."/>
            <person name="Keenan S."/>
            <person name="Kershaw J.K."/>
            <person name="Kimberley A.M."/>
            <person name="King A."/>
            <person name="Knights A."/>
            <person name="Laird G.K."/>
            <person name="Langford C."/>
            <person name="Lawlor S."/>
            <person name="Leongamornlert D.A."/>
            <person name="Leversha M."/>
            <person name="Lloyd C."/>
            <person name="Lloyd D.M."/>
            <person name="Lovell J."/>
            <person name="Martin S."/>
            <person name="Mashreghi-Mohammadi M."/>
            <person name="Matthews L."/>
            <person name="McLaren S."/>
            <person name="McLay K.E."/>
            <person name="McMurray A."/>
            <person name="Milne S."/>
            <person name="Nickerson T."/>
            <person name="Nisbett J."/>
            <person name="Nordsiek G."/>
            <person name="Pearce A.V."/>
            <person name="Peck A.I."/>
            <person name="Porter K.M."/>
            <person name="Pandian R."/>
            <person name="Pelan S."/>
            <person name="Phillimore B."/>
            <person name="Povey S."/>
            <person name="Ramsey Y."/>
            <person name="Rand V."/>
            <person name="Scharfe M."/>
            <person name="Sehra H.K."/>
            <person name="Shownkeen R."/>
            <person name="Sims S.K."/>
            <person name="Skuce C.D."/>
            <person name="Smith M."/>
            <person name="Steward C.A."/>
            <person name="Swarbreck D."/>
            <person name="Sycamore N."/>
            <person name="Tester J."/>
            <person name="Thorpe A."/>
            <person name="Tracey A."/>
            <person name="Tromans A."/>
            <person name="Thomas D.W."/>
            <person name="Wall M."/>
            <person name="Wallis J.M."/>
            <person name="West A.P."/>
            <person name="Whitehead S.L."/>
            <person name="Willey D.L."/>
            <person name="Williams S.A."/>
            <person name="Wilming L."/>
            <person name="Wray P.W."/>
            <person name="Young L."/>
            <person name="Ashurst J.L."/>
            <person name="Coulson A."/>
            <person name="Blocker H."/>
            <person name="Durbin R.M."/>
            <person name="Sulston J.E."/>
            <person name="Hubbard T."/>
            <person name="Jackson M.J."/>
            <person name="Bentley D.R."/>
            <person name="Beck S."/>
            <person name="Rogers J."/>
            <person name="Dunham I."/>
        </authorList>
    </citation>
    <scope>NUCLEOTIDE SEQUENCE [LARGE SCALE GENOMIC DNA]</scope>
</reference>
<reference key="7">
    <citation type="submission" date="2005-07" db="EMBL/GenBank/DDBJ databases">
        <authorList>
            <person name="Mural R.J."/>
            <person name="Istrail S."/>
            <person name="Sutton G.G."/>
            <person name="Florea L."/>
            <person name="Halpern A.L."/>
            <person name="Mobarry C.M."/>
            <person name="Lippert R."/>
            <person name="Walenz B."/>
            <person name="Shatkay H."/>
            <person name="Dew I."/>
            <person name="Miller J.R."/>
            <person name="Flanigan M.J."/>
            <person name="Edwards N.J."/>
            <person name="Bolanos R."/>
            <person name="Fasulo D."/>
            <person name="Halldorsson B.V."/>
            <person name="Hannenhalli S."/>
            <person name="Turner R."/>
            <person name="Yooseph S."/>
            <person name="Lu F."/>
            <person name="Nusskern D.R."/>
            <person name="Shue B.C."/>
            <person name="Zheng X.H."/>
            <person name="Zhong F."/>
            <person name="Delcher A.L."/>
            <person name="Huson D.H."/>
            <person name="Kravitz S.A."/>
            <person name="Mouchard L."/>
            <person name="Reinert K."/>
            <person name="Remington K.A."/>
            <person name="Clark A.G."/>
            <person name="Waterman M.S."/>
            <person name="Eichler E.E."/>
            <person name="Adams M.D."/>
            <person name="Hunkapiller M.W."/>
            <person name="Myers E.W."/>
            <person name="Venter J.C."/>
        </authorList>
    </citation>
    <scope>NUCLEOTIDE SEQUENCE [LARGE SCALE GENOMIC DNA]</scope>
</reference>
<reference key="8">
    <citation type="journal article" date="2004" name="Genome Res.">
        <title>The status, quality, and expansion of the NIH full-length cDNA project: the Mammalian Gene Collection (MGC).</title>
        <authorList>
            <consortium name="The MGC Project Team"/>
        </authorList>
    </citation>
    <scope>NUCLEOTIDE SEQUENCE [LARGE SCALE MRNA] (ISOFORM 1)</scope>
    <source>
        <tissue>Colon</tissue>
    </source>
</reference>
<reference key="9">
    <citation type="journal article" date="2011" name="BMC Syst. Biol.">
        <title>Initial characterization of the human central proteome.</title>
        <authorList>
            <person name="Burkard T.R."/>
            <person name="Planyavsky M."/>
            <person name="Kaupe I."/>
            <person name="Breitwieser F.P."/>
            <person name="Buerckstuemmer T."/>
            <person name="Bennett K.L."/>
            <person name="Superti-Furga G."/>
            <person name="Colinge J."/>
        </authorList>
    </citation>
    <scope>IDENTIFICATION BY MASS SPECTROMETRY [LARGE SCALE ANALYSIS]</scope>
</reference>
<reference key="10">
    <citation type="journal article" date="2014" name="J. Proteomics">
        <title>An enzyme assisted RP-RPLC approach for in-depth analysis of human liver phosphoproteome.</title>
        <authorList>
            <person name="Bian Y."/>
            <person name="Song C."/>
            <person name="Cheng K."/>
            <person name="Dong M."/>
            <person name="Wang F."/>
            <person name="Huang J."/>
            <person name="Sun D."/>
            <person name="Wang L."/>
            <person name="Ye M."/>
            <person name="Zou H."/>
        </authorList>
    </citation>
    <scope>IDENTIFICATION BY MASS SPECTROMETRY [LARGE SCALE ANALYSIS]</scope>
    <source>
        <tissue>Liver</tissue>
    </source>
</reference>
<reference key="11">
    <citation type="submission" date="2008-01" db="PDB data bank">
        <title>Human guanine deaminase (GUAD) in complex with zinc and its product xanthine.</title>
        <authorList>
            <consortium name="Structural genomics consortium (SGC)"/>
        </authorList>
    </citation>
    <scope>X-RAY CRYSTALLOGRAPHY (2.3 ANGSTROMS) IN COMPLEX WITH ZINC IONS AND XANTHINE</scope>
</reference>
<reference key="12">
    <citation type="journal article" date="2009" name="Proc. Natl. Acad. Sci. U.S.A.">
        <title>Alteration of enzyme specificity by computational loop remodeling and design.</title>
        <authorList>
            <person name="Murphy P.M."/>
            <person name="Bolduc J.M."/>
            <person name="Gallaher J.L."/>
            <person name="Stoddard B.L."/>
            <person name="Baker D."/>
        </authorList>
    </citation>
    <scope>X-RAY CRYSTALLOGRAPHY (2.37 ANGSTROMS)</scope>
</reference>
<reference key="13">
    <citation type="journal article" date="2012" name="PLoS ONE">
        <title>Pan-pathway based interaction profiling of FDA-approved nucleoside and nucleobase analogs with enzymes of the human nucleotide metabolism.</title>
        <authorList>
            <person name="Egeblad L."/>
            <person name="Welin M."/>
            <person name="Flodin S."/>
            <person name="Graslund S."/>
            <person name="Wang L."/>
            <person name="Balzarini J."/>
            <person name="Eriksson S."/>
            <person name="Nordlund P."/>
        </authorList>
    </citation>
    <scope>X-RAY CRYSTALLOGRAPHY (1.99 ANGSTROMS) IN COMPLEX WITH ZINC IONS AND SUBSTRATE ANALOG VALACICLOVIR</scope>
    <scope>FUNCTION</scope>
    <scope>CATALYTIC ACTIVITY</scope>
</reference>
<name>GUAD_HUMAN</name>
<organism>
    <name type="scientific">Homo sapiens</name>
    <name type="common">Human</name>
    <dbReference type="NCBI Taxonomy" id="9606"/>
    <lineage>
        <taxon>Eukaryota</taxon>
        <taxon>Metazoa</taxon>
        <taxon>Chordata</taxon>
        <taxon>Craniata</taxon>
        <taxon>Vertebrata</taxon>
        <taxon>Euteleostomi</taxon>
        <taxon>Mammalia</taxon>
        <taxon>Eutheria</taxon>
        <taxon>Euarchontoglires</taxon>
        <taxon>Primates</taxon>
        <taxon>Haplorrhini</taxon>
        <taxon>Catarrhini</taxon>
        <taxon>Hominidae</taxon>
        <taxon>Homo</taxon>
    </lineage>
</organism>
<dbReference type="EC" id="3.5.4.3" evidence="2 3"/>
<dbReference type="EMBL" id="AF095286">
    <property type="protein sequence ID" value="AAD25978.1"/>
    <property type="molecule type" value="mRNA"/>
</dbReference>
<dbReference type="EMBL" id="AF019638">
    <property type="protein sequence ID" value="AAF13301.1"/>
    <property type="molecule type" value="mRNA"/>
</dbReference>
<dbReference type="EMBL" id="AF144745">
    <property type="protein sequence ID" value="AAG40469.1"/>
    <property type="molecule type" value="mRNA"/>
</dbReference>
<dbReference type="EMBL" id="AB033084">
    <property type="protein sequence ID" value="BAA86572.1"/>
    <property type="status" value="ALT_INIT"/>
    <property type="molecule type" value="mRNA"/>
</dbReference>
<dbReference type="EMBL" id="AK300418">
    <property type="protein sequence ID" value="BAG62147.1"/>
    <property type="molecule type" value="mRNA"/>
</dbReference>
<dbReference type="EMBL" id="AK315988">
    <property type="protein sequence ID" value="BAH14359.1"/>
    <property type="molecule type" value="mRNA"/>
</dbReference>
<dbReference type="EMBL" id="AL583829">
    <property type="status" value="NOT_ANNOTATED_CDS"/>
    <property type="molecule type" value="Genomic_DNA"/>
</dbReference>
<dbReference type="EMBL" id="AL590311">
    <property type="status" value="NOT_ANNOTATED_CDS"/>
    <property type="molecule type" value="Genomic_DNA"/>
</dbReference>
<dbReference type="EMBL" id="AL135924">
    <property type="status" value="NOT_ANNOTATED_CDS"/>
    <property type="molecule type" value="Genomic_DNA"/>
</dbReference>
<dbReference type="EMBL" id="CH471089">
    <property type="protein sequence ID" value="EAW62529.1"/>
    <property type="molecule type" value="Genomic_DNA"/>
</dbReference>
<dbReference type="EMBL" id="BC053584">
    <property type="protein sequence ID" value="AAH53584.1"/>
    <property type="molecule type" value="mRNA"/>
</dbReference>
<dbReference type="CCDS" id="CCDS56576.1">
    <molecule id="Q9Y2T3-3"/>
</dbReference>
<dbReference type="CCDS" id="CCDS56577.1">
    <molecule id="Q9Y2T3-2"/>
</dbReference>
<dbReference type="CCDS" id="CCDS6641.1">
    <molecule id="Q9Y2T3-1"/>
</dbReference>
<dbReference type="RefSeq" id="NP_001229434.1">
    <molecule id="Q9Y2T3-3"/>
    <property type="nucleotide sequence ID" value="NM_001242505.3"/>
</dbReference>
<dbReference type="RefSeq" id="NP_001229435.1">
    <molecule id="Q9Y2T3-2"/>
    <property type="nucleotide sequence ID" value="NM_001242506.3"/>
</dbReference>
<dbReference type="RefSeq" id="NP_001229436.1">
    <molecule id="Q9Y2T3-2"/>
    <property type="nucleotide sequence ID" value="NM_001242507.3"/>
</dbReference>
<dbReference type="RefSeq" id="NP_001338501.1">
    <molecule id="Q9Y2T3-3"/>
    <property type="nucleotide sequence ID" value="NM_001351572.2"/>
</dbReference>
<dbReference type="RefSeq" id="NP_004284.1">
    <molecule id="Q9Y2T3-1"/>
    <property type="nucleotide sequence ID" value="NM_004293.5"/>
</dbReference>
<dbReference type="RefSeq" id="XP_005252374.1">
    <molecule id="Q9Y2T3-3"/>
    <property type="nucleotide sequence ID" value="XM_005252317.3"/>
</dbReference>
<dbReference type="RefSeq" id="XP_016870825.1">
    <property type="nucleotide sequence ID" value="XM_017015336.1"/>
</dbReference>
<dbReference type="RefSeq" id="XP_054220197.1">
    <molecule id="Q9Y2T3-3"/>
    <property type="nucleotide sequence ID" value="XM_054364222.1"/>
</dbReference>
<dbReference type="PDB" id="2UZ9">
    <property type="method" value="X-ray"/>
    <property type="resolution" value="2.30 A"/>
    <property type="chains" value="A=1-454"/>
</dbReference>
<dbReference type="PDB" id="3E0L">
    <property type="method" value="X-ray"/>
    <property type="resolution" value="2.37 A"/>
    <property type="chains" value="A/B=1-454"/>
</dbReference>
<dbReference type="PDB" id="4AQL">
    <property type="method" value="X-ray"/>
    <property type="resolution" value="1.99 A"/>
    <property type="chains" value="A=1-454"/>
</dbReference>
<dbReference type="PDBsum" id="2UZ9"/>
<dbReference type="PDBsum" id="3E0L"/>
<dbReference type="PDBsum" id="4AQL"/>
<dbReference type="SMR" id="Q9Y2T3"/>
<dbReference type="BioGRID" id="114976">
    <property type="interactions" value="61"/>
</dbReference>
<dbReference type="FunCoup" id="Q9Y2T3">
    <property type="interactions" value="710"/>
</dbReference>
<dbReference type="IntAct" id="Q9Y2T3">
    <property type="interactions" value="22"/>
</dbReference>
<dbReference type="MINT" id="Q9Y2T3"/>
<dbReference type="STRING" id="9606.ENSP00000238018"/>
<dbReference type="BindingDB" id="Q9Y2T3"/>
<dbReference type="ChEMBL" id="CHEMBL3129"/>
<dbReference type="DrugCentral" id="Q9Y2T3"/>
<dbReference type="MEROPS" id="M38.981"/>
<dbReference type="GlyGen" id="Q9Y2T3">
    <property type="glycosylation" value="2 sites, 1 N-linked glycan (1 site), 1 O-linked glycan (1 site)"/>
</dbReference>
<dbReference type="iPTMnet" id="Q9Y2T3"/>
<dbReference type="PhosphoSitePlus" id="Q9Y2T3"/>
<dbReference type="BioMuta" id="GDA"/>
<dbReference type="DMDM" id="9910736"/>
<dbReference type="jPOST" id="Q9Y2T3"/>
<dbReference type="MassIVE" id="Q9Y2T3"/>
<dbReference type="PaxDb" id="9606-ENSP00000238018"/>
<dbReference type="PeptideAtlas" id="Q9Y2T3"/>
<dbReference type="ProteomicsDB" id="85890">
    <molecule id="Q9Y2T3-1"/>
</dbReference>
<dbReference type="ProteomicsDB" id="85891">
    <molecule id="Q9Y2T3-2"/>
</dbReference>
<dbReference type="ProteomicsDB" id="85892">
    <molecule id="Q9Y2T3-3"/>
</dbReference>
<dbReference type="Pumba" id="Q9Y2T3"/>
<dbReference type="Antibodypedia" id="12519">
    <property type="antibodies" value="263 antibodies from 24 providers"/>
</dbReference>
<dbReference type="DNASU" id="9615"/>
<dbReference type="Ensembl" id="ENST00000238018.8">
    <molecule id="Q9Y2T3-3"/>
    <property type="protein sequence ID" value="ENSP00000238018.4"/>
    <property type="gene ID" value="ENSG00000119125.17"/>
</dbReference>
<dbReference type="Ensembl" id="ENST00000358399.8">
    <molecule id="Q9Y2T3-1"/>
    <property type="protein sequence ID" value="ENSP00000351170.4"/>
    <property type="gene ID" value="ENSG00000119125.17"/>
</dbReference>
<dbReference type="Ensembl" id="ENST00000475764.5">
    <molecule id="Q9Y2T3-1"/>
    <property type="protein sequence ID" value="ENSP00000436619.1"/>
    <property type="gene ID" value="ENSG00000119125.17"/>
</dbReference>
<dbReference type="Ensembl" id="ENST00000545168.5">
    <molecule id="Q9Y2T3-2"/>
    <property type="protein sequence ID" value="ENSP00000437972.1"/>
    <property type="gene ID" value="ENSG00000119125.17"/>
</dbReference>
<dbReference type="GeneID" id="9615"/>
<dbReference type="KEGG" id="hsa:9615"/>
<dbReference type="MANE-Select" id="ENST00000358399.8">
    <property type="protein sequence ID" value="ENSP00000351170.4"/>
    <property type="RefSeq nucleotide sequence ID" value="NM_004293.5"/>
    <property type="RefSeq protein sequence ID" value="NP_004284.1"/>
</dbReference>
<dbReference type="UCSC" id="uc004aiq.4">
    <molecule id="Q9Y2T3-1"/>
    <property type="organism name" value="human"/>
</dbReference>
<dbReference type="AGR" id="HGNC:4212"/>
<dbReference type="CTD" id="9615"/>
<dbReference type="DisGeNET" id="9615"/>
<dbReference type="GeneCards" id="GDA"/>
<dbReference type="HGNC" id="HGNC:4212">
    <property type="gene designation" value="GDA"/>
</dbReference>
<dbReference type="HPA" id="ENSG00000119125">
    <property type="expression patterns" value="Group enriched (brain, intestine, kidney, liver)"/>
</dbReference>
<dbReference type="MIM" id="139260">
    <property type="type" value="gene"/>
</dbReference>
<dbReference type="neXtProt" id="NX_Q9Y2T3"/>
<dbReference type="OpenTargets" id="ENSG00000119125"/>
<dbReference type="PharmGKB" id="PA28625"/>
<dbReference type="VEuPathDB" id="HostDB:ENSG00000119125"/>
<dbReference type="eggNOG" id="KOG3968">
    <property type="taxonomic scope" value="Eukaryota"/>
</dbReference>
<dbReference type="GeneTree" id="ENSGT00390000017130"/>
<dbReference type="HOGENOM" id="CLU_012358_0_1_1"/>
<dbReference type="InParanoid" id="Q9Y2T3"/>
<dbReference type="OMA" id="CVHMNDS"/>
<dbReference type="OrthoDB" id="194468at2759"/>
<dbReference type="PAN-GO" id="Q9Y2T3">
    <property type="GO annotations" value="4 GO annotations based on evolutionary models"/>
</dbReference>
<dbReference type="PhylomeDB" id="Q9Y2T3"/>
<dbReference type="TreeFam" id="TF324539"/>
<dbReference type="BioCyc" id="MetaCyc:HS04276-MONOMER"/>
<dbReference type="BRENDA" id="3.5.4.3">
    <property type="organism ID" value="2681"/>
</dbReference>
<dbReference type="PathwayCommons" id="Q9Y2T3"/>
<dbReference type="Reactome" id="R-HSA-74259">
    <property type="pathway name" value="Purine catabolism"/>
</dbReference>
<dbReference type="SABIO-RK" id="Q9Y2T3"/>
<dbReference type="SignaLink" id="Q9Y2T3"/>
<dbReference type="SIGNOR" id="Q9Y2T3"/>
<dbReference type="UniPathway" id="UPA00603">
    <property type="reaction ID" value="UER00660"/>
</dbReference>
<dbReference type="BioGRID-ORCS" id="9615">
    <property type="hits" value="18 hits in 1158 CRISPR screens"/>
</dbReference>
<dbReference type="ChiTaRS" id="GDA">
    <property type="organism name" value="human"/>
</dbReference>
<dbReference type="EvolutionaryTrace" id="Q9Y2T3"/>
<dbReference type="GenomeRNAi" id="9615"/>
<dbReference type="Pharos" id="Q9Y2T3">
    <property type="development level" value="Tbio"/>
</dbReference>
<dbReference type="PRO" id="PR:Q9Y2T3"/>
<dbReference type="Proteomes" id="UP000005640">
    <property type="component" value="Chromosome 9"/>
</dbReference>
<dbReference type="RNAct" id="Q9Y2T3">
    <property type="molecule type" value="protein"/>
</dbReference>
<dbReference type="Bgee" id="ENSG00000119125">
    <property type="expression patterns" value="Expressed in ileal mucosa and 141 other cell types or tissues"/>
</dbReference>
<dbReference type="ExpressionAtlas" id="Q9Y2T3">
    <property type="expression patterns" value="baseline and differential"/>
</dbReference>
<dbReference type="GO" id="GO:0005829">
    <property type="term" value="C:cytosol"/>
    <property type="evidence" value="ECO:0000318"/>
    <property type="project" value="GO_Central"/>
</dbReference>
<dbReference type="GO" id="GO:0008892">
    <property type="term" value="F:guanine deaminase activity"/>
    <property type="evidence" value="ECO:0000318"/>
    <property type="project" value="GO_Central"/>
</dbReference>
<dbReference type="GO" id="GO:0008270">
    <property type="term" value="F:zinc ion binding"/>
    <property type="evidence" value="ECO:0000318"/>
    <property type="project" value="GO_Central"/>
</dbReference>
<dbReference type="GO" id="GO:0000255">
    <property type="term" value="P:allantoin metabolic process"/>
    <property type="evidence" value="ECO:0007669"/>
    <property type="project" value="Ensembl"/>
</dbReference>
<dbReference type="GO" id="GO:0043605">
    <property type="term" value="P:amide catabolic process"/>
    <property type="evidence" value="ECO:0007669"/>
    <property type="project" value="Ensembl"/>
</dbReference>
<dbReference type="GO" id="GO:0006161">
    <property type="term" value="P:deoxyguanosine catabolic process"/>
    <property type="evidence" value="ECO:0007669"/>
    <property type="project" value="Ensembl"/>
</dbReference>
<dbReference type="GO" id="GO:0046055">
    <property type="term" value="P:dGMP catabolic process"/>
    <property type="evidence" value="ECO:0007669"/>
    <property type="project" value="Ensembl"/>
</dbReference>
<dbReference type="GO" id="GO:0046038">
    <property type="term" value="P:GMP catabolic process"/>
    <property type="evidence" value="ECO:0007669"/>
    <property type="project" value="Ensembl"/>
</dbReference>
<dbReference type="GO" id="GO:0006147">
    <property type="term" value="P:guanine catabolic process"/>
    <property type="evidence" value="ECO:0007669"/>
    <property type="project" value="UniProtKB-UniPathway"/>
</dbReference>
<dbReference type="GO" id="GO:0046098">
    <property type="term" value="P:guanine metabolic process"/>
    <property type="evidence" value="ECO:0000318"/>
    <property type="project" value="GO_Central"/>
</dbReference>
<dbReference type="GO" id="GO:0007399">
    <property type="term" value="P:nervous system development"/>
    <property type="evidence" value="ECO:0000304"/>
    <property type="project" value="ProtInc"/>
</dbReference>
<dbReference type="GO" id="GO:0006139">
    <property type="term" value="P:nucleobase-containing compound metabolic process"/>
    <property type="evidence" value="ECO:0000304"/>
    <property type="project" value="ProtInc"/>
</dbReference>
<dbReference type="CDD" id="cd01303">
    <property type="entry name" value="GDEase"/>
    <property type="match status" value="1"/>
</dbReference>
<dbReference type="FunFam" id="3.20.20.140:FF:000021">
    <property type="entry name" value="Guanine deaminase"/>
    <property type="match status" value="1"/>
</dbReference>
<dbReference type="Gene3D" id="3.20.20.140">
    <property type="entry name" value="Metal-dependent hydrolases"/>
    <property type="match status" value="1"/>
</dbReference>
<dbReference type="Gene3D" id="2.30.40.10">
    <property type="entry name" value="Urease, subunit C, domain 1"/>
    <property type="match status" value="1"/>
</dbReference>
<dbReference type="InterPro" id="IPR006680">
    <property type="entry name" value="Amidohydro-rel"/>
</dbReference>
<dbReference type="InterPro" id="IPR014311">
    <property type="entry name" value="Guanine_deaminase"/>
</dbReference>
<dbReference type="InterPro" id="IPR011059">
    <property type="entry name" value="Metal-dep_hydrolase_composite"/>
</dbReference>
<dbReference type="InterPro" id="IPR032466">
    <property type="entry name" value="Metal_Hydrolase"/>
</dbReference>
<dbReference type="InterPro" id="IPR051607">
    <property type="entry name" value="Metallo-dep_hydrolases"/>
</dbReference>
<dbReference type="NCBIfam" id="TIGR02967">
    <property type="entry name" value="guan_deamin"/>
    <property type="match status" value="1"/>
</dbReference>
<dbReference type="PANTHER" id="PTHR11271">
    <property type="entry name" value="GUANINE DEAMINASE"/>
    <property type="match status" value="1"/>
</dbReference>
<dbReference type="PANTHER" id="PTHR11271:SF6">
    <property type="entry name" value="GUANINE DEAMINASE"/>
    <property type="match status" value="1"/>
</dbReference>
<dbReference type="Pfam" id="PF01979">
    <property type="entry name" value="Amidohydro_1"/>
    <property type="match status" value="1"/>
</dbReference>
<dbReference type="SUPFAM" id="SSF51556">
    <property type="entry name" value="Metallo-dependent hydrolases"/>
    <property type="match status" value="1"/>
</dbReference>
<feature type="chain" id="PRO_0000122298" description="Guanine deaminase">
    <location>
        <begin position="1"/>
        <end position="454"/>
    </location>
</feature>
<feature type="binding site" evidence="3 12">
    <location>
        <position position="82"/>
    </location>
    <ligand>
        <name>Zn(2+)</name>
        <dbReference type="ChEBI" id="CHEBI:29105"/>
    </ligand>
</feature>
<feature type="binding site" evidence="10 12">
    <location>
        <begin position="84"/>
        <end position="87"/>
    </location>
    <ligand>
        <name>substrate</name>
    </ligand>
</feature>
<feature type="binding site" evidence="3 12">
    <location>
        <position position="84"/>
    </location>
    <ligand>
        <name>Zn(2+)</name>
        <dbReference type="ChEBI" id="CHEBI:29105"/>
    </ligand>
</feature>
<feature type="binding site" evidence="10 12">
    <location>
        <begin position="213"/>
        <end position="214"/>
    </location>
    <ligand>
        <name>substrate</name>
    </ligand>
</feature>
<feature type="binding site" evidence="10 12">
    <location>
        <begin position="240"/>
        <end position="243"/>
    </location>
    <ligand>
        <name>substrate</name>
    </ligand>
</feature>
<feature type="binding site" evidence="3 12">
    <location>
        <position position="240"/>
    </location>
    <ligand>
        <name>Zn(2+)</name>
        <dbReference type="ChEBI" id="CHEBI:29105"/>
    </ligand>
</feature>
<feature type="binding site" evidence="10 12">
    <location>
        <position position="330"/>
    </location>
    <ligand>
        <name>substrate</name>
    </ligand>
</feature>
<feature type="binding site" evidence="3 12">
    <location>
        <position position="330"/>
    </location>
    <ligand>
        <name>Zn(2+)</name>
        <dbReference type="ChEBI" id="CHEBI:29105"/>
    </ligand>
</feature>
<feature type="modified residue" description="Phosphoserine" evidence="1">
    <location>
        <position position="453"/>
    </location>
</feature>
<feature type="splice variant" id="VSP_042075" description="In isoform 2." evidence="5 7">
    <location>
        <begin position="1"/>
        <end position="74"/>
    </location>
</feature>
<feature type="splice variant" id="VSP_042076" description="In isoform 3." evidence="8">
    <original>V</original>
    <variation>VKETIHLPASSPHPPPFP</variation>
    <location>
        <position position="454"/>
    </location>
</feature>
<feature type="sequence conflict" description="In Ref. 3; AAG40469." evidence="9" ref="3">
    <original>LEV</original>
    <variation>ARI</variation>
    <location>
        <begin position="316"/>
        <end position="318"/>
    </location>
</feature>
<feature type="strand" evidence="14">
    <location>
        <begin position="11"/>
        <end position="19"/>
    </location>
</feature>
<feature type="strand" evidence="14">
    <location>
        <begin position="27"/>
        <end position="36"/>
    </location>
</feature>
<feature type="strand" evidence="14">
    <location>
        <begin position="40"/>
        <end position="47"/>
    </location>
</feature>
<feature type="helix" evidence="14">
    <location>
        <begin position="48"/>
        <end position="50"/>
    </location>
</feature>
<feature type="helix" evidence="14">
    <location>
        <begin position="51"/>
        <end position="57"/>
    </location>
</feature>
<feature type="helix" evidence="14">
    <location>
        <begin position="62"/>
        <end position="64"/>
    </location>
</feature>
<feature type="strand" evidence="13">
    <location>
        <begin position="65"/>
        <end position="67"/>
    </location>
</feature>
<feature type="strand" evidence="14">
    <location>
        <begin position="73"/>
        <end position="76"/>
    </location>
</feature>
<feature type="strand" evidence="14">
    <location>
        <begin position="78"/>
        <end position="84"/>
    </location>
</feature>
<feature type="helix" evidence="14">
    <location>
        <begin position="85"/>
        <end position="90"/>
    </location>
</feature>
<feature type="helix" evidence="14">
    <location>
        <begin position="99"/>
        <end position="105"/>
    </location>
</feature>
<feature type="helix" evidence="14">
    <location>
        <begin position="107"/>
        <end position="112"/>
    </location>
</feature>
<feature type="helix" evidence="14">
    <location>
        <begin position="113"/>
        <end position="115"/>
    </location>
</feature>
<feature type="helix" evidence="14">
    <location>
        <begin position="117"/>
        <end position="133"/>
    </location>
</feature>
<feature type="strand" evidence="14">
    <location>
        <begin position="136"/>
        <end position="142"/>
    </location>
</feature>
<feature type="helix" evidence="14">
    <location>
        <begin position="147"/>
        <end position="160"/>
    </location>
</feature>
<feature type="strand" evidence="14">
    <location>
        <begin position="163"/>
        <end position="167"/>
    </location>
</feature>
<feature type="strand" evidence="13">
    <location>
        <begin position="175"/>
        <end position="177"/>
    </location>
</feature>
<feature type="helix" evidence="14">
    <location>
        <begin position="184"/>
        <end position="201"/>
    </location>
</feature>
<feature type="strand" evidence="14">
    <location>
        <begin position="204"/>
        <end position="208"/>
    </location>
</feature>
<feature type="strand" evidence="14">
    <location>
        <begin position="210"/>
        <end position="212"/>
    </location>
</feature>
<feature type="turn" evidence="14">
    <location>
        <begin position="215"/>
        <end position="217"/>
    </location>
</feature>
<feature type="helix" evidence="14">
    <location>
        <begin position="220"/>
        <end position="232"/>
    </location>
</feature>
<feature type="strand" evidence="14">
    <location>
        <begin position="237"/>
        <end position="242"/>
    </location>
</feature>
<feature type="helix" evidence="14">
    <location>
        <begin position="245"/>
        <end position="254"/>
    </location>
</feature>
<feature type="strand" evidence="14">
    <location>
        <begin position="258"/>
        <end position="260"/>
    </location>
</feature>
<feature type="helix" evidence="14">
    <location>
        <begin position="261"/>
        <end position="266"/>
    </location>
</feature>
<feature type="turn" evidence="14">
    <location>
        <begin position="267"/>
        <end position="269"/>
    </location>
</feature>
<feature type="strand" evidence="14">
    <location>
        <begin position="275"/>
        <end position="279"/>
    </location>
</feature>
<feature type="helix" evidence="14">
    <location>
        <begin position="285"/>
        <end position="294"/>
    </location>
</feature>
<feature type="strand" evidence="14">
    <location>
        <begin position="297"/>
        <end position="300"/>
    </location>
</feature>
<feature type="helix" evidence="14">
    <location>
        <begin position="302"/>
        <end position="307"/>
    </location>
</feature>
<feature type="helix" evidence="14">
    <location>
        <begin position="315"/>
        <end position="320"/>
    </location>
</feature>
<feature type="strand" evidence="14">
    <location>
        <begin position="324"/>
        <end position="327"/>
    </location>
</feature>
<feature type="turn" evidence="14">
    <location>
        <begin position="331"/>
        <end position="333"/>
    </location>
</feature>
<feature type="helix" evidence="14">
    <location>
        <begin position="339"/>
        <end position="355"/>
    </location>
</feature>
<feature type="strand" evidence="14">
    <location>
        <begin position="358"/>
        <end position="361"/>
    </location>
</feature>
<feature type="helix" evidence="14">
    <location>
        <begin position="365"/>
        <end position="372"/>
    </location>
</feature>
<feature type="helix" evidence="14">
    <location>
        <begin position="374"/>
        <end position="379"/>
    </location>
</feature>
<feature type="turn" evidence="14">
    <location>
        <begin position="383"/>
        <end position="385"/>
    </location>
</feature>
<feature type="strand" evidence="14">
    <location>
        <begin position="386"/>
        <end position="388"/>
    </location>
</feature>
<feature type="strand" evidence="14">
    <location>
        <begin position="397"/>
        <end position="400"/>
    </location>
</feature>
<feature type="helix" evidence="14">
    <location>
        <begin position="414"/>
        <end position="417"/>
    </location>
</feature>
<feature type="strand" evidence="14">
    <location>
        <begin position="418"/>
        <end position="420"/>
    </location>
</feature>
<feature type="helix" evidence="14">
    <location>
        <begin position="423"/>
        <end position="431"/>
    </location>
</feature>
<feature type="helix" evidence="14">
    <location>
        <begin position="434"/>
        <end position="436"/>
    </location>
</feature>
<feature type="strand" evidence="14">
    <location>
        <begin position="437"/>
        <end position="442"/>
    </location>
</feature>
<feature type="strand" evidence="14">
    <location>
        <begin position="445"/>
        <end position="448"/>
    </location>
</feature>